<organism>
    <name type="scientific">Clostridium acetobutylicum (strain ATCC 824 / DSM 792 / JCM 1419 / IAM 19013 / LMG 5710 / NBRC 13948 / NRRL B-527 / VKM B-1787 / 2291 / W)</name>
    <dbReference type="NCBI Taxonomy" id="272562"/>
    <lineage>
        <taxon>Bacteria</taxon>
        <taxon>Bacillati</taxon>
        <taxon>Bacillota</taxon>
        <taxon>Clostridia</taxon>
        <taxon>Eubacteriales</taxon>
        <taxon>Clostridiaceae</taxon>
        <taxon>Clostridium</taxon>
    </lineage>
</organism>
<comment type="function">
    <text evidence="1">Catalyzes the ATP-dependent phosphorylation of N-acetyl-L-glutamate.</text>
</comment>
<comment type="catalytic activity">
    <reaction evidence="1">
        <text>N-acetyl-L-glutamate + ATP = N-acetyl-L-glutamyl 5-phosphate + ADP</text>
        <dbReference type="Rhea" id="RHEA:14629"/>
        <dbReference type="ChEBI" id="CHEBI:30616"/>
        <dbReference type="ChEBI" id="CHEBI:44337"/>
        <dbReference type="ChEBI" id="CHEBI:57936"/>
        <dbReference type="ChEBI" id="CHEBI:456216"/>
        <dbReference type="EC" id="2.7.2.8"/>
    </reaction>
</comment>
<comment type="pathway">
    <text evidence="1">Amino-acid biosynthesis; L-arginine biosynthesis; N(2)-acetyl-L-ornithine from L-glutamate: step 2/4.</text>
</comment>
<comment type="subcellular location">
    <subcellularLocation>
        <location evidence="1">Cytoplasm</location>
    </subcellularLocation>
</comment>
<comment type="similarity">
    <text evidence="1">Belongs to the acetylglutamate kinase family. ArgB subfamily.</text>
</comment>
<sequence length="295" mass="32661">MKKMQEPIEDPLSKLTQYSGKTFVIKYGGSIMKNKKAEEAFIKDVKYLRKLGINIVIVHGGGPEISRWLELSGIESRFVDGLRVTDEKVIEIVQMVLSGKINKKLSLQFNIDGVNAVGLSGVDNKLIEATKKYVYKGNETIDIGYVGKVTKVNSEFIKELLKGGQVPVIAPIGCDNKGNVYNINADYAAAFISSALDAEKLIILTDVEGVYRNINDPQSIIHEIDIKDVNYYIKEEIIKGGMIPKVQCCASAIENGTKNVQLIDGRNDHCLINDILNYRGTIISYRSGVKCQKAI</sequence>
<keyword id="KW-0028">Amino-acid biosynthesis</keyword>
<keyword id="KW-0055">Arginine biosynthesis</keyword>
<keyword id="KW-0067">ATP-binding</keyword>
<keyword id="KW-0963">Cytoplasm</keyword>
<keyword id="KW-0418">Kinase</keyword>
<keyword id="KW-0547">Nucleotide-binding</keyword>
<keyword id="KW-1185">Reference proteome</keyword>
<keyword id="KW-0808">Transferase</keyword>
<protein>
    <recommendedName>
        <fullName evidence="1">Acetylglutamate kinase</fullName>
        <ecNumber evidence="1">2.7.2.8</ecNumber>
    </recommendedName>
    <alternativeName>
        <fullName evidence="1">N-acetyl-L-glutamate 5-phosphotransferase</fullName>
    </alternativeName>
    <alternativeName>
        <fullName evidence="1">NAG kinase</fullName>
        <shortName evidence="1">NAGK</shortName>
    </alternativeName>
</protein>
<accession>Q97GH8</accession>
<name>ARGB_CLOAB</name>
<evidence type="ECO:0000255" key="1">
    <source>
        <dbReference type="HAMAP-Rule" id="MF_00082"/>
    </source>
</evidence>
<dbReference type="EC" id="2.7.2.8" evidence="1"/>
<dbReference type="EMBL" id="AE001437">
    <property type="protein sequence ID" value="AAK80344.1"/>
    <property type="molecule type" value="Genomic_DNA"/>
</dbReference>
<dbReference type="PIR" id="E97194">
    <property type="entry name" value="E97194"/>
</dbReference>
<dbReference type="RefSeq" id="NP_349004.1">
    <property type="nucleotide sequence ID" value="NC_003030.1"/>
</dbReference>
<dbReference type="RefSeq" id="WP_010965685.1">
    <property type="nucleotide sequence ID" value="NC_003030.1"/>
</dbReference>
<dbReference type="SMR" id="Q97GH8"/>
<dbReference type="STRING" id="272562.CA_C2389"/>
<dbReference type="GeneID" id="44998869"/>
<dbReference type="KEGG" id="cac:CA_C2389"/>
<dbReference type="PATRIC" id="fig|272562.8.peg.2586"/>
<dbReference type="eggNOG" id="COG0548">
    <property type="taxonomic scope" value="Bacteria"/>
</dbReference>
<dbReference type="HOGENOM" id="CLU_053680_0_0_9"/>
<dbReference type="OrthoDB" id="9803155at2"/>
<dbReference type="UniPathway" id="UPA00068">
    <property type="reaction ID" value="UER00107"/>
</dbReference>
<dbReference type="Proteomes" id="UP000000814">
    <property type="component" value="Chromosome"/>
</dbReference>
<dbReference type="GO" id="GO:0005737">
    <property type="term" value="C:cytoplasm"/>
    <property type="evidence" value="ECO:0007669"/>
    <property type="project" value="UniProtKB-SubCell"/>
</dbReference>
<dbReference type="GO" id="GO:0003991">
    <property type="term" value="F:acetylglutamate kinase activity"/>
    <property type="evidence" value="ECO:0007669"/>
    <property type="project" value="UniProtKB-UniRule"/>
</dbReference>
<dbReference type="GO" id="GO:0005524">
    <property type="term" value="F:ATP binding"/>
    <property type="evidence" value="ECO:0007669"/>
    <property type="project" value="UniProtKB-UniRule"/>
</dbReference>
<dbReference type="GO" id="GO:0042450">
    <property type="term" value="P:arginine biosynthetic process via ornithine"/>
    <property type="evidence" value="ECO:0007669"/>
    <property type="project" value="UniProtKB-UniRule"/>
</dbReference>
<dbReference type="GO" id="GO:0006526">
    <property type="term" value="P:L-arginine biosynthetic process"/>
    <property type="evidence" value="ECO:0007669"/>
    <property type="project" value="UniProtKB-UniPathway"/>
</dbReference>
<dbReference type="CDD" id="cd04250">
    <property type="entry name" value="AAK_NAGK-C"/>
    <property type="match status" value="1"/>
</dbReference>
<dbReference type="FunFam" id="3.40.1160.10:FF:000004">
    <property type="entry name" value="Acetylglutamate kinase"/>
    <property type="match status" value="1"/>
</dbReference>
<dbReference type="Gene3D" id="3.40.1160.10">
    <property type="entry name" value="Acetylglutamate kinase-like"/>
    <property type="match status" value="1"/>
</dbReference>
<dbReference type="HAMAP" id="MF_00082">
    <property type="entry name" value="ArgB"/>
    <property type="match status" value="1"/>
</dbReference>
<dbReference type="InterPro" id="IPR036393">
    <property type="entry name" value="AceGlu_kinase-like_sf"/>
</dbReference>
<dbReference type="InterPro" id="IPR004662">
    <property type="entry name" value="AcgluKinase_fam"/>
</dbReference>
<dbReference type="InterPro" id="IPR037528">
    <property type="entry name" value="ArgB"/>
</dbReference>
<dbReference type="InterPro" id="IPR001048">
    <property type="entry name" value="Asp/Glu/Uridylate_kinase"/>
</dbReference>
<dbReference type="InterPro" id="IPR001057">
    <property type="entry name" value="Glu/AcGlu_kinase"/>
</dbReference>
<dbReference type="InterPro" id="IPR041727">
    <property type="entry name" value="NAGK-C"/>
</dbReference>
<dbReference type="NCBIfam" id="TIGR00761">
    <property type="entry name" value="argB"/>
    <property type="match status" value="1"/>
</dbReference>
<dbReference type="PANTHER" id="PTHR23342">
    <property type="entry name" value="N-ACETYLGLUTAMATE SYNTHASE"/>
    <property type="match status" value="1"/>
</dbReference>
<dbReference type="PANTHER" id="PTHR23342:SF0">
    <property type="entry name" value="N-ACETYLGLUTAMATE SYNTHASE, MITOCHONDRIAL"/>
    <property type="match status" value="1"/>
</dbReference>
<dbReference type="Pfam" id="PF00696">
    <property type="entry name" value="AA_kinase"/>
    <property type="match status" value="1"/>
</dbReference>
<dbReference type="PIRSF" id="PIRSF000728">
    <property type="entry name" value="NAGK"/>
    <property type="match status" value="1"/>
</dbReference>
<dbReference type="PRINTS" id="PR00474">
    <property type="entry name" value="GLU5KINASE"/>
</dbReference>
<dbReference type="SUPFAM" id="SSF53633">
    <property type="entry name" value="Carbamate kinase-like"/>
    <property type="match status" value="1"/>
</dbReference>
<feature type="chain" id="PRO_0000112607" description="Acetylglutamate kinase">
    <location>
        <begin position="1"/>
        <end position="295"/>
    </location>
</feature>
<feature type="binding site" evidence="1">
    <location>
        <begin position="61"/>
        <end position="62"/>
    </location>
    <ligand>
        <name>substrate</name>
    </ligand>
</feature>
<feature type="binding site" evidence="1">
    <location>
        <position position="83"/>
    </location>
    <ligand>
        <name>substrate</name>
    </ligand>
</feature>
<feature type="binding site" evidence="1">
    <location>
        <position position="182"/>
    </location>
    <ligand>
        <name>substrate</name>
    </ligand>
</feature>
<feature type="site" description="Transition state stabilizer" evidence="1">
    <location>
        <position position="26"/>
    </location>
</feature>
<feature type="site" description="Transition state stabilizer" evidence="1">
    <location>
        <position position="245"/>
    </location>
</feature>
<reference key="1">
    <citation type="journal article" date="2001" name="J. Bacteriol.">
        <title>Genome sequence and comparative analysis of the solvent-producing bacterium Clostridium acetobutylicum.</title>
        <authorList>
            <person name="Noelling J."/>
            <person name="Breton G."/>
            <person name="Omelchenko M.V."/>
            <person name="Makarova K.S."/>
            <person name="Zeng Q."/>
            <person name="Gibson R."/>
            <person name="Lee H.M."/>
            <person name="Dubois J."/>
            <person name="Qiu D."/>
            <person name="Hitti J."/>
            <person name="Wolf Y.I."/>
            <person name="Tatusov R.L."/>
            <person name="Sabathe F."/>
            <person name="Doucette-Stamm L.A."/>
            <person name="Soucaille P."/>
            <person name="Daly M.J."/>
            <person name="Bennett G.N."/>
            <person name="Koonin E.V."/>
            <person name="Smith D.R."/>
        </authorList>
    </citation>
    <scope>NUCLEOTIDE SEQUENCE [LARGE SCALE GENOMIC DNA]</scope>
    <source>
        <strain>ATCC 824 / DSM 792 / JCM 1419 / IAM 19013 / LMG 5710 / NBRC 13948 / NRRL B-527 / VKM B-1787 / 2291 / W</strain>
    </source>
</reference>
<proteinExistence type="inferred from homology"/>
<gene>
    <name evidence="1" type="primary">argB</name>
    <name type="ordered locus">CA_C2389</name>
</gene>